<sequence length="355" mass="38602">MRLTHVTACICLLVAVAVLFSGCTGTTDDQTTTPTPTATAAEEVQLKVFHAGSLTGPFEKVKAEFEAEHSGVTVLLEPAGSVDCVKKITENGKPADVLASADYALIPQLMVPDDADWYLTFAKNRMVLTYSNESKYADEITAENWYEVLARDGVRWGFSDPNSDPCGYRSPMVIQLAEGYYEDDQIFETLVGEHSEITVTEEGGVYTIHAADPKPDSTTLTIRPKSVELVQMIQAGGLDYAWEYRSVAVQNDLEFIELPEEIDLSSIDFAENYATVQTEAKKGDGTTLYVGSPIVYGVTVPKIAQHPDLGIEFVEMLIGATGQEILERDGQPPIVPAGGYGEVPDALQSLVEMKS</sequence>
<organism>
    <name type="scientific">Methanoculleus marisnigri (strain ATCC 35101 / DSM 1498 / JR1)</name>
    <dbReference type="NCBI Taxonomy" id="368407"/>
    <lineage>
        <taxon>Archaea</taxon>
        <taxon>Methanobacteriati</taxon>
        <taxon>Methanobacteriota</taxon>
        <taxon>Stenosarchaea group</taxon>
        <taxon>Methanomicrobia</taxon>
        <taxon>Methanomicrobiales</taxon>
        <taxon>Methanomicrobiaceae</taxon>
        <taxon>Methanoculleus</taxon>
    </lineage>
</organism>
<feature type="signal peptide" evidence="1">
    <location>
        <begin position="1"/>
        <end position="22"/>
    </location>
</feature>
<feature type="chain" id="PRO_0000334996" description="Uncharacterized solute-binding protein Memar_1880">
    <location>
        <begin position="23"/>
        <end position="355"/>
    </location>
</feature>
<accession>A3CWQ6</accession>
<evidence type="ECO:0000255" key="1">
    <source>
        <dbReference type="PROSITE-ProRule" id="PRU00303"/>
    </source>
</evidence>
<evidence type="ECO:0000305" key="2"/>
<keyword id="KW-0732">Signal</keyword>
<name>Y1880_METMJ</name>
<dbReference type="EMBL" id="CP000562">
    <property type="protein sequence ID" value="ABN57806.1"/>
    <property type="molecule type" value="Genomic_DNA"/>
</dbReference>
<dbReference type="RefSeq" id="WP_011844715.1">
    <property type="nucleotide sequence ID" value="NC_009051.1"/>
</dbReference>
<dbReference type="SMR" id="A3CWQ6"/>
<dbReference type="STRING" id="368407.Memar_1880"/>
<dbReference type="GeneID" id="4848450"/>
<dbReference type="KEGG" id="mem:Memar_1880"/>
<dbReference type="eggNOG" id="arCOG00219">
    <property type="taxonomic scope" value="Archaea"/>
</dbReference>
<dbReference type="HOGENOM" id="CLU_055936_0_0_2"/>
<dbReference type="OrthoDB" id="7820at2157"/>
<dbReference type="Proteomes" id="UP000002146">
    <property type="component" value="Chromosome"/>
</dbReference>
<dbReference type="GO" id="GO:0030973">
    <property type="term" value="F:molybdate ion binding"/>
    <property type="evidence" value="ECO:0007669"/>
    <property type="project" value="TreeGrafter"/>
</dbReference>
<dbReference type="GO" id="GO:1901359">
    <property type="term" value="F:tungstate binding"/>
    <property type="evidence" value="ECO:0007669"/>
    <property type="project" value="InterPro"/>
</dbReference>
<dbReference type="GO" id="GO:0015689">
    <property type="term" value="P:molybdate ion transport"/>
    <property type="evidence" value="ECO:0007669"/>
    <property type="project" value="TreeGrafter"/>
</dbReference>
<dbReference type="CDD" id="cd13540">
    <property type="entry name" value="PBP2_ModA_WtpA"/>
    <property type="match status" value="1"/>
</dbReference>
<dbReference type="Gene3D" id="3.40.190.10">
    <property type="entry name" value="Periplasmic binding protein-like II"/>
    <property type="match status" value="2"/>
</dbReference>
<dbReference type="InterPro" id="IPR022498">
    <property type="entry name" value="ABC_trnspt_W-bd_WtpA"/>
</dbReference>
<dbReference type="InterPro" id="IPR050682">
    <property type="entry name" value="ModA/WtpA"/>
</dbReference>
<dbReference type="NCBIfam" id="NF003196">
    <property type="entry name" value="PRK04168.1"/>
    <property type="match status" value="1"/>
</dbReference>
<dbReference type="NCBIfam" id="TIGR03730">
    <property type="entry name" value="tungstate_WtpA"/>
    <property type="match status" value="1"/>
</dbReference>
<dbReference type="PANTHER" id="PTHR30632">
    <property type="entry name" value="MOLYBDATE-BINDING PERIPLASMIC PROTEIN"/>
    <property type="match status" value="1"/>
</dbReference>
<dbReference type="PANTHER" id="PTHR30632:SF16">
    <property type="entry name" value="MOLYBDATE_TUNGSTATE-BINDING PROTEIN WTPA"/>
    <property type="match status" value="1"/>
</dbReference>
<dbReference type="Pfam" id="PF13531">
    <property type="entry name" value="SBP_bac_11"/>
    <property type="match status" value="1"/>
</dbReference>
<dbReference type="SUPFAM" id="SSF53850">
    <property type="entry name" value="Periplasmic binding protein-like II"/>
    <property type="match status" value="1"/>
</dbReference>
<dbReference type="PROSITE" id="PS51257">
    <property type="entry name" value="PROKAR_LIPOPROTEIN"/>
    <property type="match status" value="1"/>
</dbReference>
<proteinExistence type="inferred from homology"/>
<reference key="1">
    <citation type="journal article" date="2009" name="Stand. Genomic Sci.">
        <title>Complete genome sequence of Methanoculleus marisnigri Romesser et al. 1981 type strain JR1.</title>
        <authorList>
            <person name="Anderson I.J."/>
            <person name="Sieprawska-Lupa M."/>
            <person name="Lapidus A."/>
            <person name="Nolan M."/>
            <person name="Copeland A."/>
            <person name="Glavina Del Rio T."/>
            <person name="Tice H."/>
            <person name="Dalin E."/>
            <person name="Barry K."/>
            <person name="Saunders E."/>
            <person name="Han C."/>
            <person name="Brettin T."/>
            <person name="Detter J.C."/>
            <person name="Bruce D."/>
            <person name="Mikhailova N."/>
            <person name="Pitluck S."/>
            <person name="Hauser L."/>
            <person name="Land M."/>
            <person name="Lucas S."/>
            <person name="Richardson P."/>
            <person name="Whitman W.B."/>
            <person name="Kyrpides N.C."/>
        </authorList>
    </citation>
    <scope>NUCLEOTIDE SEQUENCE [LARGE SCALE GENOMIC DNA]</scope>
    <source>
        <strain>ATCC 35101 / DSM 1498 / JR1</strain>
    </source>
</reference>
<comment type="similarity">
    <text evidence="2">Belongs to the bacterial solute-binding protein 1 family. WtpA subfamily.</text>
</comment>
<protein>
    <recommendedName>
        <fullName>Uncharacterized solute-binding protein Memar_1880</fullName>
    </recommendedName>
</protein>
<gene>
    <name type="ordered locus">Memar_1880</name>
</gene>